<proteinExistence type="inferred from homology"/>
<accession>B3DS62</accession>
<sequence length="1076" mass="120299">MESSIFKPSSMDLIRAGLQDLDKARALFDQLKADDIPDERCAELLSALAHACDPDMALSNFVDIVNAMQSSQRDLEHVIPDNDALKRLVTVLGVSDAMGKFMRFKPQLVEAAAVDNCNSHLFNHAQRRARLLKAVGADPDEPAMPVASKDLAEAATALRSSYRNQLAAIIAQDAVADDPTSIQPTISRELSDLADAALEGALAIARHETEGSEHVRFTIIGMGKLGAQELNYVSDVDLIYVVEPADKDVDHQTLIRVGTKMGTMLQRVCQSAIMGVAEQPLWQIDGGLRPEGKDGALVRVLSSHKNYYEQWAENWEFQALLKARPVAGDPDLGQAYMDMTRPFVWSASKRKNFVYDCQKMRKRVEDLIPAPLKDREIKLGRGGLRDVEFTVQMLQLVHGRTDESLRTSNTLDSLQRLSEGGYVSRKQAVRMSQDYRFERVMEHRQQIWSLKRTHLFPDLGRASVGGLEKKRDIDVDELNQNQELRRLARAFGLHPEELVDKYDDTRREVRHLHLDIYYRPMLPVNAQMENDQIVLSVEAAQERFESIGFGDPDAAIRHVQALTAGVGRAAKINRIILPAVLQWLGEGQNPDMGLLNWRKLEENFGTESGYLGFLRDSTSAAQRLCHILSNSRFLGDALNKSVESISWLGDDDNLQARTREALDVQTGSALERFGSNINEFATSMRAMRRHEIERIGLSWMSGVISDSDSLKAMTDVYDAIIDASLTWAVRHQIAEFGVETAPAGITVIAMGRYGGREVNFSSDADAILIYRPADDADDGQANAFAKKVVEDLRNILQGPTTLEPKIELDLDLRPEGKNGPLVRSYASCEEYYESWASTWERQALLRARYAAGDAELARDFLINIADPLRYPTTELTEAELQNIRKLKARMEAERLPRGVRRERHLKLGKGGLSDVEWTVQLMQLQHAGDIKDLRVNGTLEALDVLEAKKLISAIDAIQLRKAWTLCTAARNGSYLWSGRANQADILPDDIYSLGGIAVYLGYGAHRGQHFENDLLAVMRKCRDVCQRLFYGKTEGEAAAATTATASAATQQPQTAPRPRMHVIAPRLERNRRRAQR</sequence>
<feature type="chain" id="PRO_1000133896" description="Bifunctional glutamine synthetase adenylyltransferase/adenylyl-removing enzyme">
    <location>
        <begin position="1"/>
        <end position="1076"/>
    </location>
</feature>
<feature type="region of interest" description="Adenylyl removase" evidence="1">
    <location>
        <begin position="1"/>
        <end position="521"/>
    </location>
</feature>
<feature type="region of interest" description="Adenylyl transferase" evidence="1">
    <location>
        <begin position="524"/>
        <end position="1076"/>
    </location>
</feature>
<feature type="region of interest" description="Disordered" evidence="2">
    <location>
        <begin position="1042"/>
        <end position="1076"/>
    </location>
</feature>
<feature type="compositionally biased region" description="Low complexity" evidence="2">
    <location>
        <begin position="1042"/>
        <end position="1056"/>
    </location>
</feature>
<reference key="1">
    <citation type="journal article" date="2008" name="BMC Genomics">
        <title>Comparative genomic analysis of the gut bacterium Bifidobacterium longum reveals loci susceptible to deletion during pure culture growth.</title>
        <authorList>
            <person name="Lee J.H."/>
            <person name="Karamychev V.N."/>
            <person name="Kozyavkin S.A."/>
            <person name="Mills D."/>
            <person name="Pavlov A.R."/>
            <person name="Pavlova N.V."/>
            <person name="Polouchine N.N."/>
            <person name="Richardson P.M."/>
            <person name="Shakhova V.V."/>
            <person name="Slesarev A.I."/>
            <person name="Weimer B."/>
            <person name="O'Sullivan D.J."/>
        </authorList>
    </citation>
    <scope>NUCLEOTIDE SEQUENCE [LARGE SCALE GENOMIC DNA]</scope>
    <source>
        <strain>DJO10A</strain>
    </source>
</reference>
<comment type="function">
    <text evidence="1">Involved in the regulation of glutamine synthetase GlnA, a key enzyme in the process to assimilate ammonia. When cellular nitrogen levels are high, the C-terminal adenylyl transferase (AT) inactivates GlnA by covalent transfer of an adenylyl group from ATP to specific tyrosine residue of GlnA, thus reducing its activity. Conversely, when nitrogen levels are low, the N-terminal adenylyl removase (AR) activates GlnA by removing the adenylyl group by phosphorolysis, increasing its activity. The regulatory region of GlnE binds the signal transduction protein PII (GlnB) which indicates the nitrogen status of the cell.</text>
</comment>
<comment type="catalytic activity">
    <reaction evidence="1">
        <text>[glutamine synthetase]-O(4)-(5'-adenylyl)-L-tyrosine + phosphate = [glutamine synthetase]-L-tyrosine + ADP</text>
        <dbReference type="Rhea" id="RHEA:43716"/>
        <dbReference type="Rhea" id="RHEA-COMP:10660"/>
        <dbReference type="Rhea" id="RHEA-COMP:10661"/>
        <dbReference type="ChEBI" id="CHEBI:43474"/>
        <dbReference type="ChEBI" id="CHEBI:46858"/>
        <dbReference type="ChEBI" id="CHEBI:83624"/>
        <dbReference type="ChEBI" id="CHEBI:456216"/>
        <dbReference type="EC" id="2.7.7.89"/>
    </reaction>
</comment>
<comment type="catalytic activity">
    <reaction evidence="1">
        <text>[glutamine synthetase]-L-tyrosine + ATP = [glutamine synthetase]-O(4)-(5'-adenylyl)-L-tyrosine + diphosphate</text>
        <dbReference type="Rhea" id="RHEA:18589"/>
        <dbReference type="Rhea" id="RHEA-COMP:10660"/>
        <dbReference type="Rhea" id="RHEA-COMP:10661"/>
        <dbReference type="ChEBI" id="CHEBI:30616"/>
        <dbReference type="ChEBI" id="CHEBI:33019"/>
        <dbReference type="ChEBI" id="CHEBI:46858"/>
        <dbReference type="ChEBI" id="CHEBI:83624"/>
        <dbReference type="EC" id="2.7.7.42"/>
    </reaction>
</comment>
<comment type="cofactor">
    <cofactor evidence="1">
        <name>Mg(2+)</name>
        <dbReference type="ChEBI" id="CHEBI:18420"/>
    </cofactor>
</comment>
<comment type="similarity">
    <text evidence="1">Belongs to the GlnE family.</text>
</comment>
<gene>
    <name evidence="1" type="primary">glnE</name>
    <name type="ordered locus">BLD_0535</name>
</gene>
<organism>
    <name type="scientific">Bifidobacterium longum (strain DJO10A)</name>
    <dbReference type="NCBI Taxonomy" id="205913"/>
    <lineage>
        <taxon>Bacteria</taxon>
        <taxon>Bacillati</taxon>
        <taxon>Actinomycetota</taxon>
        <taxon>Actinomycetes</taxon>
        <taxon>Bifidobacteriales</taxon>
        <taxon>Bifidobacteriaceae</taxon>
        <taxon>Bifidobacterium</taxon>
    </lineage>
</organism>
<name>GLNE_BIFLD</name>
<protein>
    <recommendedName>
        <fullName evidence="1">Bifunctional glutamine synthetase adenylyltransferase/adenylyl-removing enzyme</fullName>
    </recommendedName>
    <alternativeName>
        <fullName evidence="1">ATP:glutamine synthetase adenylyltransferase</fullName>
    </alternativeName>
    <alternativeName>
        <fullName evidence="1">ATase</fullName>
    </alternativeName>
    <domain>
        <recommendedName>
            <fullName evidence="1">Glutamine synthetase adenylyl-L-tyrosine phosphorylase</fullName>
            <ecNumber evidence="1">2.7.7.89</ecNumber>
        </recommendedName>
        <alternativeName>
            <fullName evidence="1">Adenylyl removase</fullName>
            <shortName evidence="1">AR</shortName>
            <shortName evidence="1">AT-N</shortName>
        </alternativeName>
    </domain>
    <domain>
        <recommendedName>
            <fullName evidence="1">Glutamine synthetase adenylyl transferase</fullName>
            <ecNumber evidence="1">2.7.7.42</ecNumber>
        </recommendedName>
        <alternativeName>
            <fullName evidence="1">Adenylyl transferase</fullName>
            <shortName evidence="1">AT</shortName>
            <shortName evidence="1">AT-C</shortName>
        </alternativeName>
    </domain>
</protein>
<keyword id="KW-0067">ATP-binding</keyword>
<keyword id="KW-0460">Magnesium</keyword>
<keyword id="KW-0511">Multifunctional enzyme</keyword>
<keyword id="KW-0547">Nucleotide-binding</keyword>
<keyword id="KW-0548">Nucleotidyltransferase</keyword>
<keyword id="KW-0808">Transferase</keyword>
<dbReference type="EC" id="2.7.7.89" evidence="1"/>
<dbReference type="EC" id="2.7.7.42" evidence="1"/>
<dbReference type="EMBL" id="CP000605">
    <property type="protein sequence ID" value="ACD97981.1"/>
    <property type="molecule type" value="Genomic_DNA"/>
</dbReference>
<dbReference type="RefSeq" id="WP_007052222.1">
    <property type="nucleotide sequence ID" value="NZ_AABM02000001.1"/>
</dbReference>
<dbReference type="SMR" id="B3DS62"/>
<dbReference type="KEGG" id="blj:BLD_0535"/>
<dbReference type="HOGENOM" id="CLU_006233_1_0_11"/>
<dbReference type="Proteomes" id="UP000002419">
    <property type="component" value="Chromosome"/>
</dbReference>
<dbReference type="GO" id="GO:0005829">
    <property type="term" value="C:cytosol"/>
    <property type="evidence" value="ECO:0007669"/>
    <property type="project" value="TreeGrafter"/>
</dbReference>
<dbReference type="GO" id="GO:0008882">
    <property type="term" value="F:[glutamate-ammonia-ligase] adenylyltransferase activity"/>
    <property type="evidence" value="ECO:0007669"/>
    <property type="project" value="UniProtKB-UniRule"/>
</dbReference>
<dbReference type="GO" id="GO:0047388">
    <property type="term" value="F:[glutamine synthetase]-adenylyl-L-tyrosine phosphorylase activity"/>
    <property type="evidence" value="ECO:0007669"/>
    <property type="project" value="UniProtKB-EC"/>
</dbReference>
<dbReference type="GO" id="GO:0005524">
    <property type="term" value="F:ATP binding"/>
    <property type="evidence" value="ECO:0007669"/>
    <property type="project" value="UniProtKB-UniRule"/>
</dbReference>
<dbReference type="GO" id="GO:0000287">
    <property type="term" value="F:magnesium ion binding"/>
    <property type="evidence" value="ECO:0007669"/>
    <property type="project" value="UniProtKB-UniRule"/>
</dbReference>
<dbReference type="GO" id="GO:0000820">
    <property type="term" value="P:regulation of glutamine family amino acid metabolic process"/>
    <property type="evidence" value="ECO:0007669"/>
    <property type="project" value="UniProtKB-UniRule"/>
</dbReference>
<dbReference type="CDD" id="cd05401">
    <property type="entry name" value="NT_GlnE_GlnD_like"/>
    <property type="match status" value="2"/>
</dbReference>
<dbReference type="Gene3D" id="3.30.460.10">
    <property type="entry name" value="Beta Polymerase, domain 2"/>
    <property type="match status" value="2"/>
</dbReference>
<dbReference type="Gene3D" id="1.20.120.330">
    <property type="entry name" value="Nucleotidyltransferases domain 2"/>
    <property type="match status" value="2"/>
</dbReference>
<dbReference type="HAMAP" id="MF_00802">
    <property type="entry name" value="GlnE"/>
    <property type="match status" value="1"/>
</dbReference>
<dbReference type="InterPro" id="IPR023057">
    <property type="entry name" value="GlnE"/>
</dbReference>
<dbReference type="InterPro" id="IPR005190">
    <property type="entry name" value="GlnE_rpt_dom"/>
</dbReference>
<dbReference type="InterPro" id="IPR043519">
    <property type="entry name" value="NT_sf"/>
</dbReference>
<dbReference type="InterPro" id="IPR013546">
    <property type="entry name" value="PII_UdlTrfase/GS_AdlTrfase"/>
</dbReference>
<dbReference type="NCBIfam" id="NF010707">
    <property type="entry name" value="PRK14109.1"/>
    <property type="match status" value="1"/>
</dbReference>
<dbReference type="PANTHER" id="PTHR30621:SF0">
    <property type="entry name" value="BIFUNCTIONAL GLUTAMINE SYNTHETASE ADENYLYLTRANSFERASE_ADENYLYL-REMOVING ENZYME"/>
    <property type="match status" value="1"/>
</dbReference>
<dbReference type="PANTHER" id="PTHR30621">
    <property type="entry name" value="GLUTAMINE SYNTHETASE ADENYLYLTRANSFERASE"/>
    <property type="match status" value="1"/>
</dbReference>
<dbReference type="Pfam" id="PF08335">
    <property type="entry name" value="GlnD_UR_UTase"/>
    <property type="match status" value="2"/>
</dbReference>
<dbReference type="Pfam" id="PF03710">
    <property type="entry name" value="GlnE"/>
    <property type="match status" value="2"/>
</dbReference>
<dbReference type="SUPFAM" id="SSF81301">
    <property type="entry name" value="Nucleotidyltransferase"/>
    <property type="match status" value="2"/>
</dbReference>
<dbReference type="SUPFAM" id="SSF81593">
    <property type="entry name" value="Nucleotidyltransferase substrate binding subunit/domain"/>
    <property type="match status" value="2"/>
</dbReference>
<evidence type="ECO:0000255" key="1">
    <source>
        <dbReference type="HAMAP-Rule" id="MF_00802"/>
    </source>
</evidence>
<evidence type="ECO:0000256" key="2">
    <source>
        <dbReference type="SAM" id="MobiDB-lite"/>
    </source>
</evidence>